<evidence type="ECO:0000255" key="1">
    <source>
        <dbReference type="PROSITE-ProRule" id="PRU00680"/>
    </source>
</evidence>
<accession>P00707</accession>
<organism>
    <name type="scientific">Ortalis vetula</name>
    <name type="common">Plain chachalaca</name>
    <name type="synonym">Penelope vetula</name>
    <dbReference type="NCBI Taxonomy" id="8984"/>
    <lineage>
        <taxon>Eukaryota</taxon>
        <taxon>Metazoa</taxon>
        <taxon>Chordata</taxon>
        <taxon>Craniata</taxon>
        <taxon>Vertebrata</taxon>
        <taxon>Euteleostomi</taxon>
        <taxon>Archelosauria</taxon>
        <taxon>Archosauria</taxon>
        <taxon>Dinosauria</taxon>
        <taxon>Saurischia</taxon>
        <taxon>Theropoda</taxon>
        <taxon>Coelurosauria</taxon>
        <taxon>Aves</taxon>
        <taxon>Neognathae</taxon>
        <taxon>Galloanserae</taxon>
        <taxon>Galliformes</taxon>
        <taxon>Cracidae</taxon>
        <taxon>Ortalis</taxon>
    </lineage>
</organism>
<dbReference type="EC" id="3.2.1.17"/>
<dbReference type="PIR" id="A00862">
    <property type="entry name" value="LZOVE"/>
</dbReference>
<dbReference type="SMR" id="P00707"/>
<dbReference type="CAZy" id="GH22">
    <property type="family name" value="Glycoside Hydrolase Family 22"/>
</dbReference>
<dbReference type="GO" id="GO:0005576">
    <property type="term" value="C:extracellular region"/>
    <property type="evidence" value="ECO:0007669"/>
    <property type="project" value="UniProtKB-SubCell"/>
</dbReference>
<dbReference type="GO" id="GO:0003796">
    <property type="term" value="F:lysozyme activity"/>
    <property type="evidence" value="ECO:0007669"/>
    <property type="project" value="UniProtKB-EC"/>
</dbReference>
<dbReference type="GO" id="GO:0050829">
    <property type="term" value="P:defense response to Gram-negative bacterium"/>
    <property type="evidence" value="ECO:0007669"/>
    <property type="project" value="TreeGrafter"/>
</dbReference>
<dbReference type="GO" id="GO:0050830">
    <property type="term" value="P:defense response to Gram-positive bacterium"/>
    <property type="evidence" value="ECO:0007669"/>
    <property type="project" value="TreeGrafter"/>
</dbReference>
<dbReference type="GO" id="GO:0031640">
    <property type="term" value="P:killing of cells of another organism"/>
    <property type="evidence" value="ECO:0007669"/>
    <property type="project" value="UniProtKB-KW"/>
</dbReference>
<dbReference type="CDD" id="cd16897">
    <property type="entry name" value="LYZ_C"/>
    <property type="match status" value="1"/>
</dbReference>
<dbReference type="FunFam" id="1.10.530.10:FF:000001">
    <property type="entry name" value="Lysozyme C"/>
    <property type="match status" value="1"/>
</dbReference>
<dbReference type="Gene3D" id="1.10.530.10">
    <property type="match status" value="1"/>
</dbReference>
<dbReference type="InterPro" id="IPR001916">
    <property type="entry name" value="Glyco_hydro_22"/>
</dbReference>
<dbReference type="InterPro" id="IPR019799">
    <property type="entry name" value="Glyco_hydro_22_CS"/>
</dbReference>
<dbReference type="InterPro" id="IPR000974">
    <property type="entry name" value="Glyco_hydro_22_lys"/>
</dbReference>
<dbReference type="InterPro" id="IPR023346">
    <property type="entry name" value="Lysozyme-like_dom_sf"/>
</dbReference>
<dbReference type="PANTHER" id="PTHR11407">
    <property type="entry name" value="LYSOZYME C"/>
    <property type="match status" value="1"/>
</dbReference>
<dbReference type="PANTHER" id="PTHR11407:SF28">
    <property type="entry name" value="LYSOZYME C"/>
    <property type="match status" value="1"/>
</dbReference>
<dbReference type="Pfam" id="PF00062">
    <property type="entry name" value="Lys"/>
    <property type="match status" value="1"/>
</dbReference>
<dbReference type="PRINTS" id="PR00137">
    <property type="entry name" value="LYSOZYME"/>
</dbReference>
<dbReference type="PRINTS" id="PR00135">
    <property type="entry name" value="LYZLACT"/>
</dbReference>
<dbReference type="SMART" id="SM00263">
    <property type="entry name" value="LYZ1"/>
    <property type="match status" value="1"/>
</dbReference>
<dbReference type="SUPFAM" id="SSF53955">
    <property type="entry name" value="Lysozyme-like"/>
    <property type="match status" value="1"/>
</dbReference>
<dbReference type="PROSITE" id="PS00128">
    <property type="entry name" value="GLYCOSYL_HYDROL_F22_1"/>
    <property type="match status" value="1"/>
</dbReference>
<dbReference type="PROSITE" id="PS51348">
    <property type="entry name" value="GLYCOSYL_HYDROL_F22_2"/>
    <property type="match status" value="1"/>
</dbReference>
<comment type="function">
    <text>Lysozymes have primarily a bacteriolytic function; those in tissues and body fluids are associated with the monocyte-macrophage system and enhance the activity of immunoagents.</text>
</comment>
<comment type="catalytic activity">
    <reaction>
        <text>Hydrolysis of (1-&gt;4)-beta-linkages between N-acetylmuramic acid and N-acetyl-D-glucosamine residues in a peptidoglycan and between N-acetyl-D-glucosamine residues in chitodextrins.</text>
        <dbReference type="EC" id="3.2.1.17"/>
    </reaction>
</comment>
<comment type="subunit">
    <text>Monomer.</text>
</comment>
<comment type="subcellular location">
    <subcellularLocation>
        <location>Secreted</location>
    </subcellularLocation>
</comment>
<comment type="miscellaneous">
    <text>Lysozyme C is capable of both hydrolysis and transglycosylation; it also shows a slight esterase activity. It acts rapidly on both peptide-substituted and unsubstituted peptidoglycan, and slowly on chitin oligosaccharides.</text>
</comment>
<comment type="similarity">
    <text evidence="1">Belongs to the glycosyl hydrolase 22 family.</text>
</comment>
<gene>
    <name type="primary">LYZ</name>
</gene>
<name>LYSC_ORTVE</name>
<sequence>KIYKRCELAAAMKRYGLDNYRGYSLGNWVCAARYESNYNTQATNRNSNGSTDYGILQINSRWWCNDGRTPGTKNLCHISCSALMGADIAPSVRCAKRIVSDGDGMNAWVAWRKHCKGTDVSTWIKDCKL</sequence>
<protein>
    <recommendedName>
        <fullName>Lysozyme C</fullName>
        <ecNumber>3.2.1.17</ecNumber>
    </recommendedName>
    <alternativeName>
        <fullName>1,4-beta-N-acetylmuramidase C</fullName>
    </alternativeName>
</protein>
<proteinExistence type="evidence at protein level"/>
<feature type="chain" id="PRO_0000208869" description="Lysozyme C">
    <location>
        <begin position="1"/>
        <end position="129"/>
    </location>
</feature>
<feature type="domain" description="C-type lysozyme" evidence="1">
    <location>
        <begin position="1"/>
        <end position="129"/>
    </location>
</feature>
<feature type="active site" evidence="1">
    <location>
        <position position="35"/>
    </location>
</feature>
<feature type="active site" evidence="1">
    <location>
        <position position="52"/>
    </location>
</feature>
<feature type="disulfide bond" evidence="1">
    <location>
        <begin position="6"/>
        <end position="127"/>
    </location>
</feature>
<feature type="disulfide bond" evidence="1">
    <location>
        <begin position="30"/>
        <end position="115"/>
    </location>
</feature>
<feature type="disulfide bond" evidence="1">
    <location>
        <begin position="64"/>
        <end position="80"/>
    </location>
</feature>
<feature type="disulfide bond" evidence="1">
    <location>
        <begin position="76"/>
        <end position="94"/>
    </location>
</feature>
<reference key="1">
    <citation type="journal article" date="1976" name="J. Mol. Evol.">
        <title>Amino acid sequence and immunological properties of chalchalaca egg white lysozyme.</title>
        <authorList>
            <person name="Jolles J."/>
            <person name="Schoentgen F."/>
            <person name="Jolles P."/>
            <person name="Prager E.M."/>
            <person name="Wilson A.C."/>
        </authorList>
    </citation>
    <scope>PROTEIN SEQUENCE</scope>
    <source>
        <tissue>Egg white</tissue>
    </source>
</reference>
<keyword id="KW-0929">Antimicrobial</keyword>
<keyword id="KW-0081">Bacteriolytic enzyme</keyword>
<keyword id="KW-0903">Direct protein sequencing</keyword>
<keyword id="KW-1015">Disulfide bond</keyword>
<keyword id="KW-0326">Glycosidase</keyword>
<keyword id="KW-0378">Hydrolase</keyword>
<keyword id="KW-0964">Secreted</keyword>